<sequence>MDTFLFTSESVNEGHPDKLCDQVSDAILDACLAQDPESKVACETCSKTNMVMVFGEITTKANVDYEKIVRDTCRGIGFTSADVGLDADNCKVLVNIEQQSPDIAQGVHGHLTKKPEEIGAGDQGHMFGYATDETPELMPLTHVLATKLGAKLTEVRKNKTCPWLRPDGKTQVTVEYKNEGGAMVPIRVHTILISTQHDENVTNEQIAADLKEHVIKPVIPVQYLDDKTIFHLNPSGRFVIGGPHGDAGLTGRKIIIDTYGGWGAHGGGAFSGKDPTKVDRSGAYIVRQAAKSVVASGLARRCIVQVSYAIGVPEPLSVFVDTYKTGKIPDRDILELIKENFDFRPGMIAINLDLMRGGNSRYQKTAAYGHFGRDDPDFTWETVKLLKPNA</sequence>
<name>METK4_POPTR</name>
<feature type="chain" id="PRO_0000363045" description="S-adenosylmethionine synthase 4">
    <location>
        <begin position="1"/>
        <end position="390"/>
    </location>
</feature>
<feature type="binding site" evidence="3">
    <location>
        <position position="9"/>
    </location>
    <ligand>
        <name>Mg(2+)</name>
        <dbReference type="ChEBI" id="CHEBI:18420"/>
    </ligand>
</feature>
<feature type="binding site" description="in other chain" evidence="4">
    <location>
        <position position="15"/>
    </location>
    <ligand>
        <name>ATP</name>
        <dbReference type="ChEBI" id="CHEBI:30616"/>
        <note>ligand shared between two neighboring subunits</note>
    </ligand>
</feature>
<feature type="binding site" evidence="2">
    <location>
        <position position="43"/>
    </location>
    <ligand>
        <name>K(+)</name>
        <dbReference type="ChEBI" id="CHEBI:29103"/>
    </ligand>
</feature>
<feature type="binding site" description="in other chain" evidence="2">
    <location>
        <position position="56"/>
    </location>
    <ligand>
        <name>L-methionine</name>
        <dbReference type="ChEBI" id="CHEBI:57844"/>
        <note>ligand shared between two neighboring subunits</note>
    </ligand>
</feature>
<feature type="binding site" description="in other chain" evidence="2">
    <location>
        <position position="99"/>
    </location>
    <ligand>
        <name>L-methionine</name>
        <dbReference type="ChEBI" id="CHEBI:57844"/>
        <note>ligand shared between two neighboring subunits</note>
    </ligand>
</feature>
<feature type="binding site" description="in other chain" evidence="4">
    <location>
        <begin position="167"/>
        <end position="169"/>
    </location>
    <ligand>
        <name>ATP</name>
        <dbReference type="ChEBI" id="CHEBI:30616"/>
        <note>ligand shared between two neighboring subunits</note>
    </ligand>
</feature>
<feature type="binding site" description="in other chain" evidence="4">
    <location>
        <begin position="235"/>
        <end position="238"/>
    </location>
    <ligand>
        <name>ATP</name>
        <dbReference type="ChEBI" id="CHEBI:30616"/>
        <note>ligand shared between two neighboring subunits</note>
    </ligand>
</feature>
<feature type="binding site" description="in other chain" evidence="4">
    <location>
        <position position="246"/>
    </location>
    <ligand>
        <name>ATP</name>
        <dbReference type="ChEBI" id="CHEBI:30616"/>
        <note>ligand shared between two neighboring subunits</note>
    </ligand>
</feature>
<feature type="binding site" evidence="2">
    <location>
        <position position="246"/>
    </location>
    <ligand>
        <name>L-methionine</name>
        <dbReference type="ChEBI" id="CHEBI:57844"/>
        <note>ligand shared between two neighboring subunits</note>
    </ligand>
</feature>
<feature type="binding site" description="in other chain" evidence="2">
    <location>
        <begin position="252"/>
        <end position="253"/>
    </location>
    <ligand>
        <name>ATP</name>
        <dbReference type="ChEBI" id="CHEBI:30616"/>
        <note>ligand shared between two neighboring subunits</note>
    </ligand>
</feature>
<feature type="binding site" evidence="2">
    <location>
        <position position="269"/>
    </location>
    <ligand>
        <name>ATP</name>
        <dbReference type="ChEBI" id="CHEBI:30616"/>
        <note>ligand shared between two neighboring subunits</note>
    </ligand>
</feature>
<feature type="binding site" evidence="2">
    <location>
        <position position="273"/>
    </location>
    <ligand>
        <name>ATP</name>
        <dbReference type="ChEBI" id="CHEBI:30616"/>
        <note>ligand shared between two neighboring subunits</note>
    </ligand>
</feature>
<feature type="binding site" evidence="3">
    <location>
        <position position="277"/>
    </location>
    <ligand>
        <name>ATP</name>
        <dbReference type="ChEBI" id="CHEBI:30616"/>
        <note>ligand shared between two neighboring subunits</note>
    </ligand>
</feature>
<feature type="binding site" description="in other chain" evidence="2">
    <location>
        <position position="277"/>
    </location>
    <ligand>
        <name>L-methionine</name>
        <dbReference type="ChEBI" id="CHEBI:57844"/>
        <note>ligand shared between two neighboring subunits</note>
    </ligand>
</feature>
<accession>A9PHC5</accession>
<accession>B9MTG3</accession>
<keyword id="KW-0067">ATP-binding</keyword>
<keyword id="KW-0170">Cobalt</keyword>
<keyword id="KW-0963">Cytoplasm</keyword>
<keyword id="KW-0460">Magnesium</keyword>
<keyword id="KW-0479">Metal-binding</keyword>
<keyword id="KW-0547">Nucleotide-binding</keyword>
<keyword id="KW-0554">One-carbon metabolism</keyword>
<keyword id="KW-0630">Potassium</keyword>
<keyword id="KW-1185">Reference proteome</keyword>
<keyword id="KW-0808">Transferase</keyword>
<organism>
    <name type="scientific">Populus trichocarpa</name>
    <name type="common">Western balsam poplar</name>
    <name type="synonym">Populus balsamifera subsp. trichocarpa</name>
    <dbReference type="NCBI Taxonomy" id="3694"/>
    <lineage>
        <taxon>Eukaryota</taxon>
        <taxon>Viridiplantae</taxon>
        <taxon>Streptophyta</taxon>
        <taxon>Embryophyta</taxon>
        <taxon>Tracheophyta</taxon>
        <taxon>Spermatophyta</taxon>
        <taxon>Magnoliopsida</taxon>
        <taxon>eudicotyledons</taxon>
        <taxon>Gunneridae</taxon>
        <taxon>Pentapetalae</taxon>
        <taxon>rosids</taxon>
        <taxon>fabids</taxon>
        <taxon>Malpighiales</taxon>
        <taxon>Salicaceae</taxon>
        <taxon>Saliceae</taxon>
        <taxon>Populus</taxon>
    </lineage>
</organism>
<gene>
    <name type="primary">METK4</name>
    <name type="ORF">POPTR_0006s12510g</name>
</gene>
<proteinExistence type="evidence at transcript level"/>
<dbReference type="EC" id="2.5.1.6" evidence="5"/>
<dbReference type="EMBL" id="CM009295">
    <property type="protein sequence ID" value="ERP59194.1"/>
    <property type="molecule type" value="Genomic_DNA"/>
</dbReference>
<dbReference type="EMBL" id="EF147776">
    <property type="protein sequence ID" value="ABK95778.1"/>
    <property type="molecule type" value="mRNA"/>
</dbReference>
<dbReference type="RefSeq" id="XP_006381397.1">
    <property type="nucleotide sequence ID" value="XM_006381335.1"/>
</dbReference>
<dbReference type="SMR" id="A9PHC5"/>
<dbReference type="FunCoup" id="A9PHC5">
    <property type="interactions" value="3075"/>
</dbReference>
<dbReference type="STRING" id="3694.A9PHC5"/>
<dbReference type="EnsemblPlants" id="Potri.006G123200.1.v4.1">
    <property type="protein sequence ID" value="Potri.006G123200.1.v4.1"/>
    <property type="gene ID" value="Potri.006G123200.v4.1"/>
</dbReference>
<dbReference type="GeneID" id="18100144"/>
<dbReference type="Gramene" id="Potri.006G123200.1.v4.1">
    <property type="protein sequence ID" value="Potri.006G123200.1.v4.1"/>
    <property type="gene ID" value="Potri.006G123200.v4.1"/>
</dbReference>
<dbReference type="KEGG" id="pop:18100144"/>
<dbReference type="eggNOG" id="KOG1506">
    <property type="taxonomic scope" value="Eukaryota"/>
</dbReference>
<dbReference type="HOGENOM" id="CLU_041802_0_1_1"/>
<dbReference type="InParanoid" id="A9PHC5"/>
<dbReference type="OrthoDB" id="5852090at2759"/>
<dbReference type="UniPathway" id="UPA00315">
    <property type="reaction ID" value="UER00080"/>
</dbReference>
<dbReference type="Proteomes" id="UP000006729">
    <property type="component" value="Chromosome 6"/>
</dbReference>
<dbReference type="ExpressionAtlas" id="A9PHC5">
    <property type="expression patterns" value="differential"/>
</dbReference>
<dbReference type="GO" id="GO:0005829">
    <property type="term" value="C:cytosol"/>
    <property type="evidence" value="ECO:0000318"/>
    <property type="project" value="GO_Central"/>
</dbReference>
<dbReference type="GO" id="GO:0005524">
    <property type="term" value="F:ATP binding"/>
    <property type="evidence" value="ECO:0007669"/>
    <property type="project" value="UniProtKB-KW"/>
</dbReference>
<dbReference type="GO" id="GO:0046872">
    <property type="term" value="F:metal ion binding"/>
    <property type="evidence" value="ECO:0007669"/>
    <property type="project" value="UniProtKB-KW"/>
</dbReference>
<dbReference type="GO" id="GO:0004478">
    <property type="term" value="F:methionine adenosyltransferase activity"/>
    <property type="evidence" value="ECO:0000318"/>
    <property type="project" value="GO_Central"/>
</dbReference>
<dbReference type="GO" id="GO:0006730">
    <property type="term" value="P:one-carbon metabolic process"/>
    <property type="evidence" value="ECO:0007669"/>
    <property type="project" value="UniProtKB-KW"/>
</dbReference>
<dbReference type="GO" id="GO:0006556">
    <property type="term" value="P:S-adenosylmethionine biosynthetic process"/>
    <property type="evidence" value="ECO:0000318"/>
    <property type="project" value="GO_Central"/>
</dbReference>
<dbReference type="CDD" id="cd18079">
    <property type="entry name" value="S-AdoMet_synt"/>
    <property type="match status" value="1"/>
</dbReference>
<dbReference type="FunFam" id="3.30.300.10:FF:000001">
    <property type="entry name" value="S-adenosylmethionine synthase"/>
    <property type="match status" value="1"/>
</dbReference>
<dbReference type="FunFam" id="3.30.300.10:FF:000003">
    <property type="entry name" value="S-adenosylmethionine synthase"/>
    <property type="match status" value="1"/>
</dbReference>
<dbReference type="FunFam" id="3.30.300.10:FF:000004">
    <property type="entry name" value="S-adenosylmethionine synthase"/>
    <property type="match status" value="1"/>
</dbReference>
<dbReference type="Gene3D" id="3.30.300.10">
    <property type="match status" value="3"/>
</dbReference>
<dbReference type="HAMAP" id="MF_00086">
    <property type="entry name" value="S_AdoMet_synth1"/>
    <property type="match status" value="1"/>
</dbReference>
<dbReference type="InterPro" id="IPR022631">
    <property type="entry name" value="ADOMET_SYNTHASE_CS"/>
</dbReference>
<dbReference type="InterPro" id="IPR022630">
    <property type="entry name" value="S-AdoMet_synt_C"/>
</dbReference>
<dbReference type="InterPro" id="IPR022629">
    <property type="entry name" value="S-AdoMet_synt_central"/>
</dbReference>
<dbReference type="InterPro" id="IPR022628">
    <property type="entry name" value="S-AdoMet_synt_N"/>
</dbReference>
<dbReference type="InterPro" id="IPR002133">
    <property type="entry name" value="S-AdoMet_synthetase"/>
</dbReference>
<dbReference type="InterPro" id="IPR022636">
    <property type="entry name" value="S-AdoMet_synthetase_sfam"/>
</dbReference>
<dbReference type="NCBIfam" id="TIGR01034">
    <property type="entry name" value="metK"/>
    <property type="match status" value="1"/>
</dbReference>
<dbReference type="PANTHER" id="PTHR11964">
    <property type="entry name" value="S-ADENOSYLMETHIONINE SYNTHETASE"/>
    <property type="match status" value="1"/>
</dbReference>
<dbReference type="Pfam" id="PF02773">
    <property type="entry name" value="S-AdoMet_synt_C"/>
    <property type="match status" value="1"/>
</dbReference>
<dbReference type="Pfam" id="PF02772">
    <property type="entry name" value="S-AdoMet_synt_M"/>
    <property type="match status" value="1"/>
</dbReference>
<dbReference type="Pfam" id="PF00438">
    <property type="entry name" value="S-AdoMet_synt_N"/>
    <property type="match status" value="1"/>
</dbReference>
<dbReference type="PIRSF" id="PIRSF000497">
    <property type="entry name" value="MAT"/>
    <property type="match status" value="1"/>
</dbReference>
<dbReference type="SUPFAM" id="SSF55973">
    <property type="entry name" value="S-adenosylmethionine synthetase"/>
    <property type="match status" value="3"/>
</dbReference>
<dbReference type="PROSITE" id="PS00376">
    <property type="entry name" value="ADOMET_SYNTHASE_1"/>
    <property type="match status" value="1"/>
</dbReference>
<dbReference type="PROSITE" id="PS00377">
    <property type="entry name" value="ADOMET_SYNTHASE_2"/>
    <property type="match status" value="1"/>
</dbReference>
<reference key="1">
    <citation type="journal article" date="2006" name="Science">
        <title>The genome of black cottonwood, Populus trichocarpa (Torr. &amp; Gray).</title>
        <authorList>
            <person name="Tuskan G.A."/>
            <person name="Difazio S."/>
            <person name="Jansson S."/>
            <person name="Bohlmann J."/>
            <person name="Grigoriev I."/>
            <person name="Hellsten U."/>
            <person name="Putnam N."/>
            <person name="Ralph S."/>
            <person name="Rombauts S."/>
            <person name="Salamov A."/>
            <person name="Schein J."/>
            <person name="Sterck L."/>
            <person name="Aerts A."/>
            <person name="Bhalerao R.R."/>
            <person name="Bhalerao R.P."/>
            <person name="Blaudez D."/>
            <person name="Boerjan W."/>
            <person name="Brun A."/>
            <person name="Brunner A."/>
            <person name="Busov V."/>
            <person name="Campbell M."/>
            <person name="Carlson J."/>
            <person name="Chalot M."/>
            <person name="Chapman J."/>
            <person name="Chen G.-L."/>
            <person name="Cooper D."/>
            <person name="Coutinho P.M."/>
            <person name="Couturier J."/>
            <person name="Covert S."/>
            <person name="Cronk Q."/>
            <person name="Cunningham R."/>
            <person name="Davis J."/>
            <person name="Degroeve S."/>
            <person name="Dejardin A."/>
            <person name="dePamphilis C.W."/>
            <person name="Detter J."/>
            <person name="Dirks B."/>
            <person name="Dubchak I."/>
            <person name="Duplessis S."/>
            <person name="Ehlting J."/>
            <person name="Ellis B."/>
            <person name="Gendler K."/>
            <person name="Goodstein D."/>
            <person name="Gribskov M."/>
            <person name="Grimwood J."/>
            <person name="Groover A."/>
            <person name="Gunter L."/>
            <person name="Hamberger B."/>
            <person name="Heinze B."/>
            <person name="Helariutta Y."/>
            <person name="Henrissat B."/>
            <person name="Holligan D."/>
            <person name="Holt R."/>
            <person name="Huang W."/>
            <person name="Islam-Faridi N."/>
            <person name="Jones S."/>
            <person name="Jones-Rhoades M."/>
            <person name="Jorgensen R."/>
            <person name="Joshi C."/>
            <person name="Kangasjaervi J."/>
            <person name="Karlsson J."/>
            <person name="Kelleher C."/>
            <person name="Kirkpatrick R."/>
            <person name="Kirst M."/>
            <person name="Kohler A."/>
            <person name="Kalluri U."/>
            <person name="Larimer F."/>
            <person name="Leebens-Mack J."/>
            <person name="Leple J.-C."/>
            <person name="Locascio P."/>
            <person name="Lou Y."/>
            <person name="Lucas S."/>
            <person name="Martin F."/>
            <person name="Montanini B."/>
            <person name="Napoli C."/>
            <person name="Nelson D.R."/>
            <person name="Nelson C."/>
            <person name="Nieminen K."/>
            <person name="Nilsson O."/>
            <person name="Pereda V."/>
            <person name="Peter G."/>
            <person name="Philippe R."/>
            <person name="Pilate G."/>
            <person name="Poliakov A."/>
            <person name="Razumovskaya J."/>
            <person name="Richardson P."/>
            <person name="Rinaldi C."/>
            <person name="Ritland K."/>
            <person name="Rouze P."/>
            <person name="Ryaboy D."/>
            <person name="Schmutz J."/>
            <person name="Schrader J."/>
            <person name="Segerman B."/>
            <person name="Shin H."/>
            <person name="Siddiqui A."/>
            <person name="Sterky F."/>
            <person name="Terry A."/>
            <person name="Tsai C.-J."/>
            <person name="Uberbacher E."/>
            <person name="Unneberg P."/>
            <person name="Vahala J."/>
            <person name="Wall K."/>
            <person name="Wessler S."/>
            <person name="Yang G."/>
            <person name="Yin T."/>
            <person name="Douglas C."/>
            <person name="Marra M."/>
            <person name="Sandberg G."/>
            <person name="Van de Peer Y."/>
            <person name="Rokhsar D.S."/>
        </authorList>
    </citation>
    <scope>NUCLEOTIDE SEQUENCE [LARGE SCALE GENOMIC DNA]</scope>
    <source>
        <strain>cv. Nisqually</strain>
    </source>
</reference>
<reference key="2">
    <citation type="submission" date="2006-11" db="EMBL/GenBank/DDBJ databases">
        <title>The poplar transcriptome: Analysis of ca. 4,700 sequence-verified full-length cDNAs.</title>
        <authorList>
            <person name="Ralph S.G."/>
            <person name="Chun H.J.E."/>
            <person name="Cooper D."/>
            <person name="Kirkpatrick R."/>
            <person name="Palmquist D."/>
            <person name="Wynhoven B."/>
            <person name="Kolosova N."/>
            <person name="Oddy C."/>
            <person name="Jancsik S."/>
            <person name="Douglas C.J."/>
            <person name="Liu J."/>
            <person name="Butterfield Y.S.N."/>
            <person name="Stott J."/>
            <person name="Yang G."/>
            <person name="Holt R.A."/>
            <person name="Siddiqui A."/>
            <person name="Jones S.J.M."/>
            <person name="Marra M.A."/>
            <person name="Ritland K."/>
            <person name="Bohlmann J."/>
        </authorList>
    </citation>
    <scope>NUCLEOTIDE SEQUENCE [LARGE SCALE MRNA]</scope>
    <source>
        <strain>cv. Nisqually</strain>
        <tissue>Leaf</tissue>
    </source>
</reference>
<comment type="function">
    <text evidence="5">Catalyzes the formation of S-adenosylmethionine from methionine and ATP. The reaction comprises two steps that are both catalyzed by the same enzyme: formation of S-adenosylmethionine (AdoMet) and triphosphate, and subsequent hydrolysis of the triphosphate.</text>
</comment>
<comment type="catalytic activity">
    <reaction evidence="5">
        <text>L-methionine + ATP + H2O = S-adenosyl-L-methionine + phosphate + diphosphate</text>
        <dbReference type="Rhea" id="RHEA:21080"/>
        <dbReference type="ChEBI" id="CHEBI:15377"/>
        <dbReference type="ChEBI" id="CHEBI:30616"/>
        <dbReference type="ChEBI" id="CHEBI:33019"/>
        <dbReference type="ChEBI" id="CHEBI:43474"/>
        <dbReference type="ChEBI" id="CHEBI:57844"/>
        <dbReference type="ChEBI" id="CHEBI:59789"/>
        <dbReference type="EC" id="2.5.1.6"/>
    </reaction>
</comment>
<comment type="cofactor">
    <cofactor evidence="5">
        <name>Mn(2+)</name>
        <dbReference type="ChEBI" id="CHEBI:29035"/>
    </cofactor>
    <cofactor evidence="5">
        <name>Mg(2+)</name>
        <dbReference type="ChEBI" id="CHEBI:18420"/>
    </cofactor>
    <cofactor evidence="5">
        <name>Co(2+)</name>
        <dbReference type="ChEBI" id="CHEBI:48828"/>
    </cofactor>
    <text evidence="3 5">Binds 2 divalent ions per subunit. The metal ions interact primarily with the substrate (By similarity). Can utilize magnesium, manganese or cobalt (in vitro) (By similarity).</text>
</comment>
<comment type="cofactor">
    <cofactor evidence="5">
        <name>K(+)</name>
        <dbReference type="ChEBI" id="CHEBI:29103"/>
    </cofactor>
    <text evidence="3">Binds 1 potassium ion per subunit. The potassium ion interacts primarily with the substrate (By similarity).</text>
</comment>
<comment type="pathway">
    <text evidence="5">Amino-acid biosynthesis; S-adenosyl-L-methionine biosynthesis; S-adenosyl-L-methionine from L-methionine: step 1/1.</text>
</comment>
<comment type="subunit">
    <text evidence="1">Homotetramer.</text>
</comment>
<comment type="subcellular location">
    <subcellularLocation>
        <location evidence="1">Cytoplasm</location>
    </subcellularLocation>
</comment>
<comment type="similarity">
    <text evidence="6">Belongs to the AdoMet synthase family.</text>
</comment>
<protein>
    <recommendedName>
        <fullName>S-adenosylmethionine synthase 4</fullName>
        <shortName>AdoMet synthase 4</shortName>
        <ecNumber evidence="5">2.5.1.6</ecNumber>
    </recommendedName>
    <alternativeName>
        <fullName>Methionine adenosyltransferase 4</fullName>
        <shortName>MAT 4</shortName>
    </alternativeName>
</protein>
<evidence type="ECO:0000250" key="1"/>
<evidence type="ECO:0000250" key="2">
    <source>
        <dbReference type="UniProtKB" id="P0A817"/>
    </source>
</evidence>
<evidence type="ECO:0000250" key="3">
    <source>
        <dbReference type="UniProtKB" id="P13444"/>
    </source>
</evidence>
<evidence type="ECO:0000250" key="4">
    <source>
        <dbReference type="UniProtKB" id="Q00266"/>
    </source>
</evidence>
<evidence type="ECO:0000250" key="5">
    <source>
        <dbReference type="UniProtKB" id="Q96551"/>
    </source>
</evidence>
<evidence type="ECO:0000305" key="6"/>